<evidence type="ECO:0000250" key="1">
    <source>
        <dbReference type="UniProtKB" id="P03433"/>
    </source>
</evidence>
<evidence type="ECO:0000255" key="2">
    <source>
        <dbReference type="HAMAP-Rule" id="MF_04063"/>
    </source>
</evidence>
<feature type="chain" id="PRO_0000373006" description="Polymerase acidic protein">
    <location>
        <begin position="1"/>
        <end position="716"/>
    </location>
</feature>
<feature type="short sequence motif" description="Nuclear localization signal 1 (NLS1)" evidence="1 2">
    <location>
        <begin position="124"/>
        <end position="139"/>
    </location>
</feature>
<feature type="short sequence motif" description="Nuclear localization signal 2 (NLS2)" evidence="1 2">
    <location>
        <begin position="184"/>
        <end position="247"/>
    </location>
</feature>
<feature type="binding site" evidence="2">
    <location>
        <position position="41"/>
    </location>
    <ligand>
        <name>Mn(2+)</name>
        <dbReference type="ChEBI" id="CHEBI:29035"/>
        <label>1</label>
    </ligand>
</feature>
<feature type="binding site" evidence="2">
    <location>
        <position position="80"/>
    </location>
    <ligand>
        <name>Mn(2+)</name>
        <dbReference type="ChEBI" id="CHEBI:29035"/>
        <label>2</label>
    </ligand>
</feature>
<feature type="binding site" evidence="2">
    <location>
        <position position="108"/>
    </location>
    <ligand>
        <name>Mn(2+)</name>
        <dbReference type="ChEBI" id="CHEBI:29035"/>
        <label>1</label>
    </ligand>
</feature>
<feature type="binding site" evidence="2">
    <location>
        <position position="108"/>
    </location>
    <ligand>
        <name>Mn(2+)</name>
        <dbReference type="ChEBI" id="CHEBI:29035"/>
        <label>2</label>
    </ligand>
</feature>
<feature type="binding site" evidence="2">
    <location>
        <position position="119"/>
    </location>
    <ligand>
        <name>Mn(2+)</name>
        <dbReference type="ChEBI" id="CHEBI:29035"/>
        <label>1</label>
    </ligand>
</feature>
<feature type="binding site" evidence="2">
    <location>
        <position position="120"/>
    </location>
    <ligand>
        <name>Mn(2+)</name>
        <dbReference type="ChEBI" id="CHEBI:29035"/>
        <label>1</label>
    </ligand>
</feature>
<gene>
    <name evidence="2" type="primary">PA</name>
</gene>
<sequence length="716" mass="82874">MEDFVRQCFNPMIVELAEKAMKEYGEDLKIETNKFAAICTHLEVCFMYSDFHFINEQGESIIVEPEDPNALLKHRFEIIEGRDRTMAWTVVNSICNTTGAEKPKFLPDLYDYKENRFIEIGVTRREVHIYYLEKANKIKSEKTHIHIFSFTGEEMATKADYTLDEESRARIKTRLFTIRQEMASRGLWDSFRQSERGEETIEERFEITGTMRRLADQSLPPNFSCLENFRAYVDGFEPNGYIEGKLSQMSKEVNARIEPFLKTTPRPIRLPDGPPCSQRSKFLLMDALKLSIEDPSHEGEGIPLYDAIKCMRTFFGWKEPYVVKPHEKGINPNYLLSWKQVLAELQDIENEEKIPRTKNMKKTSQLKWALGENMAPEKVDFDDCKDISDLKQYDSDEPELRSLSSWIQNEFNKACELTDSIWIELDEIGEDVAPIEHIASMRRNYFTAEVSHCRATEYIMKGVYINTALLNASCAAMDDFQLIPMISKCRTKEGRRKTNLYGFIIKGRSHLRNDTDVVNFVSMEFSLTDPRLEPHKWEKYCVLEIGDMLLRSAIGQVSRPMFLYVRTNGTSKIKMKWGMEMRRCLLQSLQQIESMIEAESSVKEKDMTKEFFENRSETWPIGESPKGVEEGSIGKVCRTLLAKSVFNSLYASPQLEGFSAESRKLLLIVQALRDNLEPGTFDLGGLYEAIEECLINDPWVLLNASWFNSFLTHALR</sequence>
<dbReference type="EC" id="3.1.-.-" evidence="2"/>
<dbReference type="EMBL" id="CY020458">
    <property type="protein sequence ID" value="ABO38369.1"/>
    <property type="molecule type" value="Viral_cRNA"/>
</dbReference>
<dbReference type="SMR" id="A4GCK4"/>
<dbReference type="MEROPS" id="S62.001"/>
<dbReference type="Proteomes" id="UP000008580">
    <property type="component" value="Genome"/>
</dbReference>
<dbReference type="GO" id="GO:0030430">
    <property type="term" value="C:host cell cytoplasm"/>
    <property type="evidence" value="ECO:0007669"/>
    <property type="project" value="UniProtKB-SubCell"/>
</dbReference>
<dbReference type="GO" id="GO:0042025">
    <property type="term" value="C:host cell nucleus"/>
    <property type="evidence" value="ECO:0007669"/>
    <property type="project" value="UniProtKB-SubCell"/>
</dbReference>
<dbReference type="GO" id="GO:0004519">
    <property type="term" value="F:endonuclease activity"/>
    <property type="evidence" value="ECO:0007669"/>
    <property type="project" value="UniProtKB-KW"/>
</dbReference>
<dbReference type="GO" id="GO:0046872">
    <property type="term" value="F:metal ion binding"/>
    <property type="evidence" value="ECO:0007669"/>
    <property type="project" value="UniProtKB-KW"/>
</dbReference>
<dbReference type="GO" id="GO:0003723">
    <property type="term" value="F:RNA binding"/>
    <property type="evidence" value="ECO:0007669"/>
    <property type="project" value="UniProtKB-UniRule"/>
</dbReference>
<dbReference type="GO" id="GO:0075526">
    <property type="term" value="P:cap snatching"/>
    <property type="evidence" value="ECO:0007669"/>
    <property type="project" value="UniProtKB-UniRule"/>
</dbReference>
<dbReference type="GO" id="GO:0006351">
    <property type="term" value="P:DNA-templated transcription"/>
    <property type="evidence" value="ECO:0007669"/>
    <property type="project" value="UniProtKB-UniRule"/>
</dbReference>
<dbReference type="GO" id="GO:0039657">
    <property type="term" value="P:symbiont-mediated suppression of host gene expression"/>
    <property type="evidence" value="ECO:0007669"/>
    <property type="project" value="UniProtKB-KW"/>
</dbReference>
<dbReference type="GO" id="GO:0039523">
    <property type="term" value="P:symbiont-mediated suppression of host mRNA transcription via inhibition of RNA polymerase II activity"/>
    <property type="evidence" value="ECO:0007669"/>
    <property type="project" value="UniProtKB-UniRule"/>
</dbReference>
<dbReference type="GO" id="GO:0039694">
    <property type="term" value="P:viral RNA genome replication"/>
    <property type="evidence" value="ECO:0007669"/>
    <property type="project" value="InterPro"/>
</dbReference>
<dbReference type="GO" id="GO:0075523">
    <property type="term" value="P:viral translational frameshifting"/>
    <property type="evidence" value="ECO:0007669"/>
    <property type="project" value="UniProtKB-KW"/>
</dbReference>
<dbReference type="FunFam" id="3.40.91.90:FF:000001">
    <property type="entry name" value="Polymerase acidic protein"/>
    <property type="match status" value="1"/>
</dbReference>
<dbReference type="Gene3D" id="3.40.91.90">
    <property type="entry name" value="Influenza RNA-dependent RNA polymerase subunit PA, endonuclease domain"/>
    <property type="match status" value="1"/>
</dbReference>
<dbReference type="HAMAP" id="MF_04063">
    <property type="entry name" value="INFV_PA"/>
    <property type="match status" value="1"/>
</dbReference>
<dbReference type="InterPro" id="IPR037534">
    <property type="entry name" value="INFV_PA"/>
</dbReference>
<dbReference type="InterPro" id="IPR001009">
    <property type="entry name" value="PA/PA-X"/>
</dbReference>
<dbReference type="InterPro" id="IPR038372">
    <property type="entry name" value="PA/PA-X_sf"/>
</dbReference>
<dbReference type="Pfam" id="PF00603">
    <property type="entry name" value="Flu_PA"/>
    <property type="match status" value="1"/>
</dbReference>
<organism>
    <name type="scientific">Influenza A virus (strain A/India/6263/1980 H1N1)</name>
    <dbReference type="NCBI Taxonomy" id="393562"/>
    <lineage>
        <taxon>Viruses</taxon>
        <taxon>Riboviria</taxon>
        <taxon>Orthornavirae</taxon>
        <taxon>Negarnaviricota</taxon>
        <taxon>Polyploviricotina</taxon>
        <taxon>Insthoviricetes</taxon>
        <taxon>Articulavirales</taxon>
        <taxon>Orthomyxoviridae</taxon>
        <taxon>Alphainfluenzavirus</taxon>
        <taxon>Alphainfluenzavirus influenzae</taxon>
        <taxon>Influenza A virus</taxon>
    </lineage>
</organism>
<accession>A4GCK4</accession>
<protein>
    <recommendedName>
        <fullName evidence="2">Polymerase acidic protein</fullName>
        <ecNumber evidence="2">3.1.-.-</ecNumber>
    </recommendedName>
    <alternativeName>
        <fullName evidence="2">RNA-directed RNA polymerase subunit P2</fullName>
    </alternativeName>
</protein>
<proteinExistence type="inferred from homology"/>
<reference key="1">
    <citation type="submission" date="2007-03" db="EMBL/GenBank/DDBJ databases">
        <title>The NIAID influenza genome sequencing project.</title>
        <authorList>
            <person name="Ghedin E."/>
            <person name="Spiro D."/>
            <person name="Miller N."/>
            <person name="Zaborsky J."/>
            <person name="Feldblyum T."/>
            <person name="Subbu V."/>
            <person name="Shumway M."/>
            <person name="Sparenborg J."/>
            <person name="Groveman L."/>
            <person name="Halpin R."/>
            <person name="Sitz J."/>
            <person name="Koo H."/>
            <person name="Salzberg S.L."/>
            <person name="Webster R.G."/>
            <person name="Hoffmann E."/>
            <person name="Krauss S."/>
            <person name="Naeve C."/>
            <person name="Bao Y."/>
            <person name="Bolotov P."/>
            <person name="Dernovoy D."/>
            <person name="Kiryutin B."/>
            <person name="Lipman D.J."/>
            <person name="Tatusova T."/>
        </authorList>
    </citation>
    <scope>NUCLEOTIDE SEQUENCE [GENOMIC RNA]</scope>
</reference>
<reference key="2">
    <citation type="submission" date="2007-03" db="EMBL/GenBank/DDBJ databases">
        <authorList>
            <consortium name="The NIAID Influenza Genome Sequencing Consortium"/>
        </authorList>
    </citation>
    <scope>NUCLEOTIDE SEQUENCE [GENOMIC RNA]</scope>
</reference>
<keyword id="KW-1157">Cap snatching</keyword>
<keyword id="KW-0255">Endonuclease</keyword>
<keyword id="KW-1262">Eukaryotic host gene expression shutoff by virus</keyword>
<keyword id="KW-1191">Eukaryotic host transcription shutoff by virus</keyword>
<keyword id="KW-1035">Host cytoplasm</keyword>
<keyword id="KW-1190">Host gene expression shutoff by virus</keyword>
<keyword id="KW-1048">Host nucleus</keyword>
<keyword id="KW-0945">Host-virus interaction</keyword>
<keyword id="KW-0378">Hydrolase</keyword>
<keyword id="KW-1104">Inhibition of host RNA polymerase II by virus</keyword>
<keyword id="KW-0464">Manganese</keyword>
<keyword id="KW-0479">Metal-binding</keyword>
<keyword id="KW-0540">Nuclease</keyword>
<keyword id="KW-0597">Phosphoprotein</keyword>
<keyword id="KW-0688">Ribosomal frameshifting</keyword>
<organismHost>
    <name type="scientific">Aves</name>
    <dbReference type="NCBI Taxonomy" id="8782"/>
</organismHost>
<organismHost>
    <name type="scientific">Homo sapiens</name>
    <name type="common">Human</name>
    <dbReference type="NCBI Taxonomy" id="9606"/>
</organismHost>
<organismHost>
    <name type="scientific">Sus scrofa</name>
    <name type="common">Pig</name>
    <dbReference type="NCBI Taxonomy" id="9823"/>
</organismHost>
<name>PA_I80AA</name>
<comment type="function">
    <text evidence="2">Plays an essential role in viral RNA transcription and replication by forming the heterotrimeric polymerase complex together with PB1 and PB2 subunits. The complex transcribes viral mRNAs by using a unique mechanism called cap-snatching. It consists in the hijacking and cleavage of host capped pre-mRNAs. These short capped RNAs are then used as primers for viral mRNAs. The PB2 subunit is responsible for the binding of the 5' cap of cellular pre-mRNAs which are subsequently cleaved after 10-13 nucleotides by the PA subunit that carries the endonuclease activity.</text>
</comment>
<comment type="cofactor">
    <cofactor evidence="2">
        <name>Mn(2+)</name>
        <dbReference type="ChEBI" id="CHEBI:29035"/>
    </cofactor>
    <text evidence="2">Binds 2 manganese ions per subunit.</text>
</comment>
<comment type="subunit">
    <text evidence="1 2">Influenza RNA polymerase is composed of three subunits: PB1, PB2 and PA. Interacts (via C-terminus) with PB1 (via N-terminus).</text>
</comment>
<comment type="subcellular location">
    <subcellularLocation>
        <location evidence="2">Host cytoplasm</location>
    </subcellularLocation>
    <subcellularLocation>
        <location evidence="2">Host nucleus</location>
    </subcellularLocation>
    <text evidence="1 2">PB1 and PA are transported in the host nucleus as a complex.</text>
</comment>
<comment type="alternative products">
    <event type="ribosomal frameshifting"/>
    <isoform>
        <id>A4GCK4-1</id>
        <name>PA</name>
        <sequence type="displayed"/>
    </isoform>
    <isoform>
        <id>P0DJS0-1</id>
        <name>PA-X</name>
        <sequence type="external"/>
    </isoform>
</comment>
<comment type="PTM">
    <text evidence="1 2">Phosphorylated on serines and threonines by host kinases, including human casein kinase II.</text>
</comment>
<comment type="similarity">
    <text evidence="2">Belongs to the influenza viruses PA family.</text>
</comment>